<feature type="chain" id="PRO_0000155823" description="Quinolinate synthase">
    <location>
        <begin position="1"/>
        <end position="394"/>
    </location>
</feature>
<feature type="binding site" evidence="1">
    <location>
        <position position="67"/>
    </location>
    <ligand>
        <name>iminosuccinate</name>
        <dbReference type="ChEBI" id="CHEBI:77875"/>
    </ligand>
</feature>
<feature type="binding site" evidence="1">
    <location>
        <position position="84"/>
    </location>
    <ligand>
        <name>iminosuccinate</name>
        <dbReference type="ChEBI" id="CHEBI:77875"/>
    </ligand>
</feature>
<feature type="binding site" evidence="1">
    <location>
        <position position="131"/>
    </location>
    <ligand>
        <name>[4Fe-4S] cluster</name>
        <dbReference type="ChEBI" id="CHEBI:49883"/>
    </ligand>
</feature>
<feature type="binding site" evidence="1">
    <location>
        <begin position="163"/>
        <end position="165"/>
    </location>
    <ligand>
        <name>iminosuccinate</name>
        <dbReference type="ChEBI" id="CHEBI:77875"/>
    </ligand>
</feature>
<feature type="binding site" evidence="1">
    <location>
        <position position="184"/>
    </location>
    <ligand>
        <name>iminosuccinate</name>
        <dbReference type="ChEBI" id="CHEBI:77875"/>
    </ligand>
</feature>
<feature type="binding site" evidence="1">
    <location>
        <position position="254"/>
    </location>
    <ligand>
        <name>[4Fe-4S] cluster</name>
        <dbReference type="ChEBI" id="CHEBI:49883"/>
    </ligand>
</feature>
<feature type="binding site" evidence="1">
    <location>
        <begin position="280"/>
        <end position="282"/>
    </location>
    <ligand>
        <name>iminosuccinate</name>
        <dbReference type="ChEBI" id="CHEBI:77875"/>
    </ligand>
</feature>
<feature type="binding site" evidence="1">
    <location>
        <position position="297"/>
    </location>
    <ligand>
        <name>iminosuccinate</name>
        <dbReference type="ChEBI" id="CHEBI:77875"/>
    </ligand>
</feature>
<feature type="binding site" evidence="1">
    <location>
        <position position="346"/>
    </location>
    <ligand>
        <name>[4Fe-4S] cluster</name>
        <dbReference type="ChEBI" id="CHEBI:49883"/>
    </ligand>
</feature>
<proteinExistence type="inferred from homology"/>
<comment type="function">
    <text evidence="1">Catalyzes the condensation of iminoaspartate with dihydroxyacetone phosphate to form quinolinate.</text>
</comment>
<comment type="catalytic activity">
    <reaction evidence="1">
        <text>iminosuccinate + dihydroxyacetone phosphate = quinolinate + phosphate + 2 H2O + H(+)</text>
        <dbReference type="Rhea" id="RHEA:25888"/>
        <dbReference type="ChEBI" id="CHEBI:15377"/>
        <dbReference type="ChEBI" id="CHEBI:15378"/>
        <dbReference type="ChEBI" id="CHEBI:29959"/>
        <dbReference type="ChEBI" id="CHEBI:43474"/>
        <dbReference type="ChEBI" id="CHEBI:57642"/>
        <dbReference type="ChEBI" id="CHEBI:77875"/>
        <dbReference type="EC" id="2.5.1.72"/>
    </reaction>
    <physiologicalReaction direction="left-to-right" evidence="1">
        <dbReference type="Rhea" id="RHEA:25889"/>
    </physiologicalReaction>
</comment>
<comment type="cofactor">
    <cofactor evidence="1">
        <name>[4Fe-4S] cluster</name>
        <dbReference type="ChEBI" id="CHEBI:49883"/>
    </cofactor>
    <text evidence="1">Binds 1 [4Fe-4S] cluster per subunit.</text>
</comment>
<comment type="pathway">
    <text evidence="1">Cofactor biosynthesis; NAD(+) biosynthesis; quinolinate from iminoaspartate: step 1/1.</text>
</comment>
<comment type="subcellular location">
    <subcellularLocation>
        <location evidence="1">Cytoplasm</location>
    </subcellularLocation>
</comment>
<comment type="similarity">
    <text evidence="1">Belongs to the quinolinate synthase family. Type 3 subfamily.</text>
</comment>
<protein>
    <recommendedName>
        <fullName evidence="1">Quinolinate synthase</fullName>
        <ecNumber evidence="1">2.5.1.72</ecNumber>
    </recommendedName>
</protein>
<dbReference type="EC" id="2.5.1.72" evidence="1"/>
<dbReference type="EMBL" id="AL939111">
    <property type="protein sequence ID" value="CAD55295.1"/>
    <property type="molecule type" value="Genomic_DNA"/>
</dbReference>
<dbReference type="RefSeq" id="NP_733560.1">
    <property type="nucleotide sequence ID" value="NC_003888.3"/>
</dbReference>
<dbReference type="SMR" id="Q9F364"/>
<dbReference type="FunCoup" id="Q9F364">
    <property type="interactions" value="124"/>
</dbReference>
<dbReference type="STRING" id="100226.gene:17759760"/>
<dbReference type="PaxDb" id="100226-SCO2162"/>
<dbReference type="KEGG" id="sco:SCO2162"/>
<dbReference type="PATRIC" id="fig|100226.15.peg.2199"/>
<dbReference type="eggNOG" id="COG0379">
    <property type="taxonomic scope" value="Bacteria"/>
</dbReference>
<dbReference type="HOGENOM" id="CLU_047382_2_0_11"/>
<dbReference type="InParanoid" id="Q9F364"/>
<dbReference type="OrthoDB" id="9801204at2"/>
<dbReference type="PhylomeDB" id="Q9F364"/>
<dbReference type="UniPathway" id="UPA00253">
    <property type="reaction ID" value="UER00327"/>
</dbReference>
<dbReference type="Proteomes" id="UP000001973">
    <property type="component" value="Chromosome"/>
</dbReference>
<dbReference type="GO" id="GO:0005829">
    <property type="term" value="C:cytosol"/>
    <property type="evidence" value="ECO:0000318"/>
    <property type="project" value="GO_Central"/>
</dbReference>
<dbReference type="GO" id="GO:0051539">
    <property type="term" value="F:4 iron, 4 sulfur cluster binding"/>
    <property type="evidence" value="ECO:0000318"/>
    <property type="project" value="GO_Central"/>
</dbReference>
<dbReference type="GO" id="GO:0046872">
    <property type="term" value="F:metal ion binding"/>
    <property type="evidence" value="ECO:0007669"/>
    <property type="project" value="UniProtKB-KW"/>
</dbReference>
<dbReference type="GO" id="GO:0008987">
    <property type="term" value="F:quinolinate synthetase A activity"/>
    <property type="evidence" value="ECO:0000318"/>
    <property type="project" value="GO_Central"/>
</dbReference>
<dbReference type="GO" id="GO:0034628">
    <property type="term" value="P:'de novo' NAD biosynthetic process from L-aspartate"/>
    <property type="evidence" value="ECO:0000318"/>
    <property type="project" value="GO_Central"/>
</dbReference>
<dbReference type="FunFam" id="3.40.50.10800:FF:000001">
    <property type="entry name" value="Quinolinate synthase A"/>
    <property type="match status" value="1"/>
</dbReference>
<dbReference type="Gene3D" id="3.40.50.10800">
    <property type="entry name" value="NadA-like"/>
    <property type="match status" value="3"/>
</dbReference>
<dbReference type="HAMAP" id="MF_00569">
    <property type="entry name" value="NadA_type3"/>
    <property type="match status" value="1"/>
</dbReference>
<dbReference type="InterPro" id="IPR003473">
    <property type="entry name" value="NadA"/>
</dbReference>
<dbReference type="InterPro" id="IPR036094">
    <property type="entry name" value="NadA_sf"/>
</dbReference>
<dbReference type="InterPro" id="IPR023515">
    <property type="entry name" value="Quinolinate_synth_A_type3"/>
</dbReference>
<dbReference type="NCBIfam" id="TIGR00550">
    <property type="entry name" value="nadA"/>
    <property type="match status" value="1"/>
</dbReference>
<dbReference type="NCBIfam" id="NF006881">
    <property type="entry name" value="PRK09375.2-2"/>
    <property type="match status" value="1"/>
</dbReference>
<dbReference type="NCBIfam" id="NF006883">
    <property type="entry name" value="PRK09375.2-4"/>
    <property type="match status" value="1"/>
</dbReference>
<dbReference type="PANTHER" id="PTHR30573:SF0">
    <property type="entry name" value="QUINOLINATE SYNTHASE, CHLOROPLASTIC"/>
    <property type="match status" value="1"/>
</dbReference>
<dbReference type="PANTHER" id="PTHR30573">
    <property type="entry name" value="QUINOLINATE SYNTHETASE A"/>
    <property type="match status" value="1"/>
</dbReference>
<dbReference type="Pfam" id="PF02445">
    <property type="entry name" value="NadA"/>
    <property type="match status" value="1"/>
</dbReference>
<dbReference type="SUPFAM" id="SSF142754">
    <property type="entry name" value="NadA-like"/>
    <property type="match status" value="1"/>
</dbReference>
<name>NADA_STRCO</name>
<evidence type="ECO:0000255" key="1">
    <source>
        <dbReference type="HAMAP-Rule" id="MF_00569"/>
    </source>
</evidence>
<sequence length="394" mass="43125">MTTAQTQELDVQPTPLALLLLGREADPRSERGVECPGDLPSPSDPDLVARARAAKEKLGDKVFVLGHHYQRDEVIQFADVTGDSFKLARDAAARPEAEYIVFCGVHFMAESADILTSNDQKVVLPDLAAGCSMADMATAEQVAECWDVLTEAGIAEQVVPVSYMNSSADIKAFTGKHGGTICTSSNAERALNWAFEQGEKVLFLPDQHLGRNTAVRDLGMSLEDCVVYNPHRPNGGLTAKELRDANMILWRGHCSVHGRFSLDSVNDVRERIPGVNVLVHPECKHEVVAAADYVGSTEYIIKALEAAPAGSKWAIGTELNLVRRLANRFAAEDKEIVFLDKTVCFCSTMNRIDLPHLVWTLESLAEGTLVNRIEVDQETEAFAKLALERMLALP</sequence>
<reference key="1">
    <citation type="journal article" date="2002" name="Nature">
        <title>Complete genome sequence of the model actinomycete Streptomyces coelicolor A3(2).</title>
        <authorList>
            <person name="Bentley S.D."/>
            <person name="Chater K.F."/>
            <person name="Cerdeno-Tarraga A.-M."/>
            <person name="Challis G.L."/>
            <person name="Thomson N.R."/>
            <person name="James K.D."/>
            <person name="Harris D.E."/>
            <person name="Quail M.A."/>
            <person name="Kieser H."/>
            <person name="Harper D."/>
            <person name="Bateman A."/>
            <person name="Brown S."/>
            <person name="Chandra G."/>
            <person name="Chen C.W."/>
            <person name="Collins M."/>
            <person name="Cronin A."/>
            <person name="Fraser A."/>
            <person name="Goble A."/>
            <person name="Hidalgo J."/>
            <person name="Hornsby T."/>
            <person name="Howarth S."/>
            <person name="Huang C.-H."/>
            <person name="Kieser T."/>
            <person name="Larke L."/>
            <person name="Murphy L.D."/>
            <person name="Oliver K."/>
            <person name="O'Neil S."/>
            <person name="Rabbinowitsch E."/>
            <person name="Rajandream M.A."/>
            <person name="Rutherford K.M."/>
            <person name="Rutter S."/>
            <person name="Seeger K."/>
            <person name="Saunders D."/>
            <person name="Sharp S."/>
            <person name="Squares R."/>
            <person name="Squares S."/>
            <person name="Taylor K."/>
            <person name="Warren T."/>
            <person name="Wietzorrek A."/>
            <person name="Woodward J.R."/>
            <person name="Barrell B.G."/>
            <person name="Parkhill J."/>
            <person name="Hopwood D.A."/>
        </authorList>
    </citation>
    <scope>NUCLEOTIDE SEQUENCE [LARGE SCALE GENOMIC DNA]</scope>
    <source>
        <strain>ATCC BAA-471 / A3(2) / M145</strain>
    </source>
</reference>
<organism>
    <name type="scientific">Streptomyces coelicolor (strain ATCC BAA-471 / A3(2) / M145)</name>
    <dbReference type="NCBI Taxonomy" id="100226"/>
    <lineage>
        <taxon>Bacteria</taxon>
        <taxon>Bacillati</taxon>
        <taxon>Actinomycetota</taxon>
        <taxon>Actinomycetes</taxon>
        <taxon>Kitasatosporales</taxon>
        <taxon>Streptomycetaceae</taxon>
        <taxon>Streptomyces</taxon>
        <taxon>Streptomyces albidoflavus group</taxon>
    </lineage>
</organism>
<keyword id="KW-0004">4Fe-4S</keyword>
<keyword id="KW-0963">Cytoplasm</keyword>
<keyword id="KW-0408">Iron</keyword>
<keyword id="KW-0411">Iron-sulfur</keyword>
<keyword id="KW-0479">Metal-binding</keyword>
<keyword id="KW-0662">Pyridine nucleotide biosynthesis</keyword>
<keyword id="KW-1185">Reference proteome</keyword>
<keyword id="KW-0808">Transferase</keyword>
<accession>Q9F364</accession>
<accession>Q9X820</accession>
<gene>
    <name evidence="1" type="primary">nadA</name>
    <name type="ordered locus">SCO2162</name>
    <name type="ORF">SC6G10.35</name>
    <name type="ORF">SC6G10A.01</name>
    <name type="ORF">ST6G10A.01</name>
</gene>